<accession>Q8HVM6</accession>
<feature type="chain" id="PRO_0000250835" description="NAD(P)H-quinone oxidoreductase subunit I, chloroplastic">
    <location>
        <begin position="1"/>
        <end position="166"/>
    </location>
</feature>
<feature type="domain" description="4Fe-4S ferredoxin-type 1" evidence="1">
    <location>
        <begin position="55"/>
        <end position="84"/>
    </location>
</feature>
<feature type="domain" description="4Fe-4S ferredoxin-type 2" evidence="1">
    <location>
        <begin position="95"/>
        <end position="124"/>
    </location>
</feature>
<feature type="binding site" evidence="1">
    <location>
        <position position="64"/>
    </location>
    <ligand>
        <name>[4Fe-4S] cluster</name>
        <dbReference type="ChEBI" id="CHEBI:49883"/>
        <label>1</label>
    </ligand>
</feature>
<feature type="binding site" evidence="1">
    <location>
        <position position="67"/>
    </location>
    <ligand>
        <name>[4Fe-4S] cluster</name>
        <dbReference type="ChEBI" id="CHEBI:49883"/>
        <label>1</label>
    </ligand>
</feature>
<feature type="binding site" evidence="1">
    <location>
        <position position="70"/>
    </location>
    <ligand>
        <name>[4Fe-4S] cluster</name>
        <dbReference type="ChEBI" id="CHEBI:49883"/>
        <label>1</label>
    </ligand>
</feature>
<feature type="binding site" evidence="1">
    <location>
        <position position="74"/>
    </location>
    <ligand>
        <name>[4Fe-4S] cluster</name>
        <dbReference type="ChEBI" id="CHEBI:49883"/>
        <label>2</label>
    </ligand>
</feature>
<feature type="binding site" evidence="1">
    <location>
        <position position="104"/>
    </location>
    <ligand>
        <name>[4Fe-4S] cluster</name>
        <dbReference type="ChEBI" id="CHEBI:49883"/>
        <label>2</label>
    </ligand>
</feature>
<feature type="binding site" evidence="1">
    <location>
        <position position="107"/>
    </location>
    <ligand>
        <name>[4Fe-4S] cluster</name>
        <dbReference type="ChEBI" id="CHEBI:49883"/>
        <label>2</label>
    </ligand>
</feature>
<feature type="binding site" evidence="1">
    <location>
        <position position="110"/>
    </location>
    <ligand>
        <name>[4Fe-4S] cluster</name>
        <dbReference type="ChEBI" id="CHEBI:49883"/>
        <label>2</label>
    </ligand>
</feature>
<feature type="binding site" evidence="1">
    <location>
        <position position="114"/>
    </location>
    <ligand>
        <name>[4Fe-4S] cluster</name>
        <dbReference type="ChEBI" id="CHEBI:49883"/>
        <label>1</label>
    </ligand>
</feature>
<reference key="1">
    <citation type="submission" date="2003-01" db="EMBL/GenBank/DDBJ databases">
        <title>Chloroplast DNA phylogeny of tribe Heliantheae (Asteraceae).</title>
        <authorList>
            <person name="Panero J.L."/>
            <person name="Baldwin B.G."/>
            <person name="Schilling E.E."/>
            <person name="Clevinger J.A."/>
        </authorList>
    </citation>
    <scope>NUCLEOTIDE SEQUENCE [GENOMIC DNA]</scope>
</reference>
<geneLocation type="chloroplast"/>
<evidence type="ECO:0000255" key="1">
    <source>
        <dbReference type="HAMAP-Rule" id="MF_01351"/>
    </source>
</evidence>
<protein>
    <recommendedName>
        <fullName evidence="1">NAD(P)H-quinone oxidoreductase subunit I, chloroplastic</fullName>
        <ecNumber evidence="1">7.1.1.-</ecNumber>
    </recommendedName>
    <alternativeName>
        <fullName evidence="1">NAD(P)H dehydrogenase subunit I</fullName>
        <shortName evidence="1">NDH subunit I</shortName>
    </alternativeName>
    <alternativeName>
        <fullName evidence="1">NADH-plastoquinone oxidoreductase subunit I</fullName>
    </alternativeName>
</protein>
<comment type="function">
    <text evidence="1">NDH shuttles electrons from NAD(P)H:plastoquinone, via FMN and iron-sulfur (Fe-S) centers, to quinones in the photosynthetic chain and possibly in a chloroplast respiratory chain. The immediate electron acceptor for the enzyme in this species is believed to be plastoquinone. Couples the redox reaction to proton translocation, and thus conserves the redox energy in a proton gradient.</text>
</comment>
<comment type="catalytic activity">
    <reaction evidence="1">
        <text>a plastoquinone + NADH + (n+1) H(+)(in) = a plastoquinol + NAD(+) + n H(+)(out)</text>
        <dbReference type="Rhea" id="RHEA:42608"/>
        <dbReference type="Rhea" id="RHEA-COMP:9561"/>
        <dbReference type="Rhea" id="RHEA-COMP:9562"/>
        <dbReference type="ChEBI" id="CHEBI:15378"/>
        <dbReference type="ChEBI" id="CHEBI:17757"/>
        <dbReference type="ChEBI" id="CHEBI:57540"/>
        <dbReference type="ChEBI" id="CHEBI:57945"/>
        <dbReference type="ChEBI" id="CHEBI:62192"/>
    </reaction>
</comment>
<comment type="catalytic activity">
    <reaction evidence="1">
        <text>a plastoquinone + NADPH + (n+1) H(+)(in) = a plastoquinol + NADP(+) + n H(+)(out)</text>
        <dbReference type="Rhea" id="RHEA:42612"/>
        <dbReference type="Rhea" id="RHEA-COMP:9561"/>
        <dbReference type="Rhea" id="RHEA-COMP:9562"/>
        <dbReference type="ChEBI" id="CHEBI:15378"/>
        <dbReference type="ChEBI" id="CHEBI:17757"/>
        <dbReference type="ChEBI" id="CHEBI:57783"/>
        <dbReference type="ChEBI" id="CHEBI:58349"/>
        <dbReference type="ChEBI" id="CHEBI:62192"/>
    </reaction>
</comment>
<comment type="cofactor">
    <cofactor evidence="1">
        <name>[4Fe-4S] cluster</name>
        <dbReference type="ChEBI" id="CHEBI:49883"/>
    </cofactor>
    <text evidence="1">Binds 2 [4Fe-4S] clusters per subunit.</text>
</comment>
<comment type="subunit">
    <text evidence="1">NDH is composed of at least 16 different subunits, 5 of which are encoded in the nucleus.</text>
</comment>
<comment type="subcellular location">
    <subcellularLocation>
        <location evidence="1">Plastid</location>
        <location evidence="1">Chloroplast thylakoid membrane</location>
        <topology evidence="1">Peripheral membrane protein</topology>
    </subcellularLocation>
</comment>
<comment type="similarity">
    <text evidence="1">Belongs to the complex I 23 kDa subunit family.</text>
</comment>
<keyword id="KW-0004">4Fe-4S</keyword>
<keyword id="KW-0150">Chloroplast</keyword>
<keyword id="KW-0408">Iron</keyword>
<keyword id="KW-0411">Iron-sulfur</keyword>
<keyword id="KW-0472">Membrane</keyword>
<keyword id="KW-0479">Metal-binding</keyword>
<keyword id="KW-0520">NAD</keyword>
<keyword id="KW-0521">NADP</keyword>
<keyword id="KW-0934">Plastid</keyword>
<keyword id="KW-0618">Plastoquinone</keyword>
<keyword id="KW-0874">Quinone</keyword>
<keyword id="KW-0677">Repeat</keyword>
<keyword id="KW-0793">Thylakoid</keyword>
<keyword id="KW-1278">Translocase</keyword>
<organism>
    <name type="scientific">Podachaenium eminens</name>
    <name type="common">Giant tree daisy</name>
    <dbReference type="NCBI Taxonomy" id="121888"/>
    <lineage>
        <taxon>Eukaryota</taxon>
        <taxon>Viridiplantae</taxon>
        <taxon>Streptophyta</taxon>
        <taxon>Embryophyta</taxon>
        <taxon>Tracheophyta</taxon>
        <taxon>Spermatophyta</taxon>
        <taxon>Magnoliopsida</taxon>
        <taxon>eudicotyledons</taxon>
        <taxon>Gunneridae</taxon>
        <taxon>Pentapetalae</taxon>
        <taxon>asterids</taxon>
        <taxon>campanulids</taxon>
        <taxon>Asterales</taxon>
        <taxon>Asteraceae</taxon>
        <taxon>Asteroideae</taxon>
        <taxon>Heliantheae alliance</taxon>
        <taxon>Heliantheae</taxon>
        <taxon>Podachaenium</taxon>
    </lineage>
</organism>
<gene>
    <name evidence="1" type="primary">ndhI</name>
</gene>
<proteinExistence type="inferred from homology"/>
<name>NDHI_PODEM</name>
<sequence length="166" mass="19475">MFPMVTEFMNYGQQTVRAARYIGQGFMITLSHANRLPVTIQYPYEKLITSERFRGRIHFEFDKCIACEVCVRVCPIDLPVVDWKLETDIRKKRLLNYSIDFGICIFCGNCVEYCPTNCLSMTEEYELSTYDRHELNYNQIALGRLPMSIIDDYTIRTILNLPEIKT</sequence>
<dbReference type="EC" id="7.1.1.-" evidence="1"/>
<dbReference type="EMBL" id="AF383837">
    <property type="protein sequence ID" value="AAN61778.1"/>
    <property type="molecule type" value="Genomic_DNA"/>
</dbReference>
<dbReference type="SMR" id="Q8HVM6"/>
<dbReference type="GO" id="GO:0009535">
    <property type="term" value="C:chloroplast thylakoid membrane"/>
    <property type="evidence" value="ECO:0007669"/>
    <property type="project" value="UniProtKB-SubCell"/>
</dbReference>
<dbReference type="GO" id="GO:0051539">
    <property type="term" value="F:4 iron, 4 sulfur cluster binding"/>
    <property type="evidence" value="ECO:0007669"/>
    <property type="project" value="UniProtKB-KW"/>
</dbReference>
<dbReference type="GO" id="GO:0005506">
    <property type="term" value="F:iron ion binding"/>
    <property type="evidence" value="ECO:0007669"/>
    <property type="project" value="UniProtKB-UniRule"/>
</dbReference>
<dbReference type="GO" id="GO:0008137">
    <property type="term" value="F:NADH dehydrogenase (ubiquinone) activity"/>
    <property type="evidence" value="ECO:0007669"/>
    <property type="project" value="InterPro"/>
</dbReference>
<dbReference type="GO" id="GO:0048038">
    <property type="term" value="F:quinone binding"/>
    <property type="evidence" value="ECO:0007669"/>
    <property type="project" value="UniProtKB-KW"/>
</dbReference>
<dbReference type="GO" id="GO:0019684">
    <property type="term" value="P:photosynthesis, light reaction"/>
    <property type="evidence" value="ECO:0007669"/>
    <property type="project" value="UniProtKB-UniRule"/>
</dbReference>
<dbReference type="FunFam" id="3.30.70.3270:FF:000006">
    <property type="entry name" value="NAD(P)H-quinone oxidoreductase subunit I, chloroplastic"/>
    <property type="match status" value="1"/>
</dbReference>
<dbReference type="Gene3D" id="3.30.70.3270">
    <property type="match status" value="1"/>
</dbReference>
<dbReference type="HAMAP" id="MF_01351">
    <property type="entry name" value="NDH1_NuoI"/>
    <property type="match status" value="1"/>
</dbReference>
<dbReference type="InterPro" id="IPR017896">
    <property type="entry name" value="4Fe4S_Fe-S-bd"/>
</dbReference>
<dbReference type="InterPro" id="IPR017900">
    <property type="entry name" value="4Fe4S_Fe_S_CS"/>
</dbReference>
<dbReference type="InterPro" id="IPR010226">
    <property type="entry name" value="NADH_quinone_OxRdtase_chainI"/>
</dbReference>
<dbReference type="InterPro" id="IPR004497">
    <property type="entry name" value="NDHI"/>
</dbReference>
<dbReference type="NCBIfam" id="TIGR00403">
    <property type="entry name" value="ndhI"/>
    <property type="match status" value="1"/>
</dbReference>
<dbReference type="NCBIfam" id="TIGR01971">
    <property type="entry name" value="NuoI"/>
    <property type="match status" value="1"/>
</dbReference>
<dbReference type="NCBIfam" id="NF004537">
    <property type="entry name" value="PRK05888.1-3"/>
    <property type="match status" value="1"/>
</dbReference>
<dbReference type="PANTHER" id="PTHR47275">
    <property type="entry name" value="NAD(P)H-QUINONE OXIDOREDUCTASE SUBUNIT I, CHLOROPLASTIC"/>
    <property type="match status" value="1"/>
</dbReference>
<dbReference type="PANTHER" id="PTHR47275:SF1">
    <property type="entry name" value="NAD(P)H-QUINONE OXIDOREDUCTASE SUBUNIT I, CHLOROPLASTIC"/>
    <property type="match status" value="1"/>
</dbReference>
<dbReference type="Pfam" id="PF00037">
    <property type="entry name" value="Fer4"/>
    <property type="match status" value="2"/>
</dbReference>
<dbReference type="SUPFAM" id="SSF54862">
    <property type="entry name" value="4Fe-4S ferredoxins"/>
    <property type="match status" value="1"/>
</dbReference>
<dbReference type="PROSITE" id="PS00198">
    <property type="entry name" value="4FE4S_FER_1"/>
    <property type="match status" value="2"/>
</dbReference>
<dbReference type="PROSITE" id="PS51379">
    <property type="entry name" value="4FE4S_FER_2"/>
    <property type="match status" value="2"/>
</dbReference>